<proteinExistence type="inferred from homology"/>
<keyword id="KW-0004">4Fe-4S</keyword>
<keyword id="KW-0028">Amino-acid biosynthesis</keyword>
<keyword id="KW-0100">Branched-chain amino acid biosynthesis</keyword>
<keyword id="KW-0408">Iron</keyword>
<keyword id="KW-0411">Iron-sulfur</keyword>
<keyword id="KW-0432">Leucine biosynthesis</keyword>
<keyword id="KW-0456">Lyase</keyword>
<keyword id="KW-0479">Metal-binding</keyword>
<protein>
    <recommendedName>
        <fullName evidence="1">3-isopropylmalate dehydratase large subunit</fullName>
        <ecNumber evidence="1">4.2.1.33</ecNumber>
    </recommendedName>
    <alternativeName>
        <fullName evidence="1">Alpha-IPM isomerase</fullName>
        <shortName evidence="1">IPMI</shortName>
    </alternativeName>
    <alternativeName>
        <fullName evidence="1">Isopropylmalate isomerase</fullName>
    </alternativeName>
</protein>
<name>LEUC_BACCQ</name>
<organism>
    <name type="scientific">Bacillus cereus (strain Q1)</name>
    <dbReference type="NCBI Taxonomy" id="361100"/>
    <lineage>
        <taxon>Bacteria</taxon>
        <taxon>Bacillati</taxon>
        <taxon>Bacillota</taxon>
        <taxon>Bacilli</taxon>
        <taxon>Bacillales</taxon>
        <taxon>Bacillaceae</taxon>
        <taxon>Bacillus</taxon>
        <taxon>Bacillus cereus group</taxon>
    </lineage>
</organism>
<accession>B9IUZ2</accession>
<gene>
    <name evidence="1" type="primary">leuC</name>
    <name type="ordered locus">BCQ_1475</name>
</gene>
<evidence type="ECO:0000255" key="1">
    <source>
        <dbReference type="HAMAP-Rule" id="MF_01026"/>
    </source>
</evidence>
<sequence>MGKRLLDKLWERHVVATNENGLDLLYIDLHLVHEVTSPQAFEGLRLTNRTVRRPDLTFATMDHNIPTKDVWNITDRIAKQQLDTLRENCKQFQVPLADIGDEEQGIVHVIGPELGLTQPGKTIVCGDSHTATHGAFGALAFGIGTSEVEHVLATQTLWQRKPKAMGIELKGKLQKGVYAKDIILHLLSKYGVAVGTGYVMEFYGETIQAMEMEERMTLCNMAIEGGAKAGIIAPDEKTVAYVKGRKYAPRDYETFEKKWFELYTDADAIYDLHISIDVTDLAPYVTWGTNPSMGVRIDEKLPEKHDVNDERAFSYMGLSPGQSTYDIPVQHVFIGSCTNSRLSDLEIAAAVVKGRKVKEGVRALVVPGSKRVRDAAMQKGLHHIFEEAGFEWREPGCSMCLGMNPDQVPEGEHCASTSNRNFEGRQGKGARTHLVSPAMAAAAALYGHFVDTRKESYDGAISYS</sequence>
<dbReference type="EC" id="4.2.1.33" evidence="1"/>
<dbReference type="EMBL" id="CP000227">
    <property type="protein sequence ID" value="ACM11903.1"/>
    <property type="molecule type" value="Genomic_DNA"/>
</dbReference>
<dbReference type="SMR" id="B9IUZ2"/>
<dbReference type="KEGG" id="bcq:BCQ_1475"/>
<dbReference type="HOGENOM" id="CLU_006714_3_4_9"/>
<dbReference type="UniPathway" id="UPA00048">
    <property type="reaction ID" value="UER00071"/>
</dbReference>
<dbReference type="Proteomes" id="UP000000441">
    <property type="component" value="Chromosome"/>
</dbReference>
<dbReference type="GO" id="GO:0003861">
    <property type="term" value="F:3-isopropylmalate dehydratase activity"/>
    <property type="evidence" value="ECO:0007669"/>
    <property type="project" value="UniProtKB-UniRule"/>
</dbReference>
<dbReference type="GO" id="GO:0051539">
    <property type="term" value="F:4 iron, 4 sulfur cluster binding"/>
    <property type="evidence" value="ECO:0007669"/>
    <property type="project" value="UniProtKB-KW"/>
</dbReference>
<dbReference type="GO" id="GO:0046872">
    <property type="term" value="F:metal ion binding"/>
    <property type="evidence" value="ECO:0007669"/>
    <property type="project" value="UniProtKB-KW"/>
</dbReference>
<dbReference type="GO" id="GO:0009098">
    <property type="term" value="P:L-leucine biosynthetic process"/>
    <property type="evidence" value="ECO:0007669"/>
    <property type="project" value="UniProtKB-UniRule"/>
</dbReference>
<dbReference type="CDD" id="cd01583">
    <property type="entry name" value="IPMI"/>
    <property type="match status" value="1"/>
</dbReference>
<dbReference type="FunFam" id="3.30.499.10:FF:000007">
    <property type="entry name" value="3-isopropylmalate dehydratase large subunit"/>
    <property type="match status" value="1"/>
</dbReference>
<dbReference type="Gene3D" id="3.30.499.10">
    <property type="entry name" value="Aconitase, domain 3"/>
    <property type="match status" value="2"/>
</dbReference>
<dbReference type="HAMAP" id="MF_01026">
    <property type="entry name" value="LeuC_type1"/>
    <property type="match status" value="1"/>
</dbReference>
<dbReference type="InterPro" id="IPR004430">
    <property type="entry name" value="3-IsopropMal_deHydase_lsu"/>
</dbReference>
<dbReference type="InterPro" id="IPR015931">
    <property type="entry name" value="Acnase/IPM_dHydase_lsu_aba_1/3"/>
</dbReference>
<dbReference type="InterPro" id="IPR001030">
    <property type="entry name" value="Acoase/IPM_deHydtase_lsu_aba"/>
</dbReference>
<dbReference type="InterPro" id="IPR018136">
    <property type="entry name" value="Aconitase_4Fe-4S_BS"/>
</dbReference>
<dbReference type="InterPro" id="IPR036008">
    <property type="entry name" value="Aconitase_4Fe-4S_dom"/>
</dbReference>
<dbReference type="InterPro" id="IPR050067">
    <property type="entry name" value="IPM_dehydratase_rel_enz"/>
</dbReference>
<dbReference type="InterPro" id="IPR033941">
    <property type="entry name" value="IPMI_cat"/>
</dbReference>
<dbReference type="NCBIfam" id="TIGR00170">
    <property type="entry name" value="leuC"/>
    <property type="match status" value="1"/>
</dbReference>
<dbReference type="NCBIfam" id="NF004016">
    <property type="entry name" value="PRK05478.1"/>
    <property type="match status" value="1"/>
</dbReference>
<dbReference type="NCBIfam" id="NF009116">
    <property type="entry name" value="PRK12466.1"/>
    <property type="match status" value="1"/>
</dbReference>
<dbReference type="PANTHER" id="PTHR43822:SF9">
    <property type="entry name" value="3-ISOPROPYLMALATE DEHYDRATASE"/>
    <property type="match status" value="1"/>
</dbReference>
<dbReference type="PANTHER" id="PTHR43822">
    <property type="entry name" value="HOMOACONITASE, MITOCHONDRIAL-RELATED"/>
    <property type="match status" value="1"/>
</dbReference>
<dbReference type="Pfam" id="PF00330">
    <property type="entry name" value="Aconitase"/>
    <property type="match status" value="1"/>
</dbReference>
<dbReference type="PRINTS" id="PR00415">
    <property type="entry name" value="ACONITASE"/>
</dbReference>
<dbReference type="SUPFAM" id="SSF53732">
    <property type="entry name" value="Aconitase iron-sulfur domain"/>
    <property type="match status" value="1"/>
</dbReference>
<dbReference type="PROSITE" id="PS00450">
    <property type="entry name" value="ACONITASE_1"/>
    <property type="match status" value="1"/>
</dbReference>
<dbReference type="PROSITE" id="PS01244">
    <property type="entry name" value="ACONITASE_2"/>
    <property type="match status" value="1"/>
</dbReference>
<reference key="1">
    <citation type="journal article" date="2009" name="J. Bacteriol.">
        <title>Complete genome sequence of the extremophilic Bacillus cereus strain Q1 with industrial applications.</title>
        <authorList>
            <person name="Xiong Z."/>
            <person name="Jiang Y."/>
            <person name="Qi D."/>
            <person name="Lu H."/>
            <person name="Yang F."/>
            <person name="Yang J."/>
            <person name="Chen L."/>
            <person name="Sun L."/>
            <person name="Xu X."/>
            <person name="Xue Y."/>
            <person name="Zhu Y."/>
            <person name="Jin Q."/>
        </authorList>
    </citation>
    <scope>NUCLEOTIDE SEQUENCE [LARGE SCALE GENOMIC DNA]</scope>
    <source>
        <strain>Q1</strain>
    </source>
</reference>
<comment type="function">
    <text evidence="1">Catalyzes the isomerization between 2-isopropylmalate and 3-isopropylmalate, via the formation of 2-isopropylmaleate.</text>
</comment>
<comment type="catalytic activity">
    <reaction evidence="1">
        <text>(2R,3S)-3-isopropylmalate = (2S)-2-isopropylmalate</text>
        <dbReference type="Rhea" id="RHEA:32287"/>
        <dbReference type="ChEBI" id="CHEBI:1178"/>
        <dbReference type="ChEBI" id="CHEBI:35121"/>
        <dbReference type="EC" id="4.2.1.33"/>
    </reaction>
</comment>
<comment type="cofactor">
    <cofactor evidence="1">
        <name>[4Fe-4S] cluster</name>
        <dbReference type="ChEBI" id="CHEBI:49883"/>
    </cofactor>
    <text evidence="1">Binds 1 [4Fe-4S] cluster per subunit.</text>
</comment>
<comment type="pathway">
    <text evidence="1">Amino-acid biosynthesis; L-leucine biosynthesis; L-leucine from 3-methyl-2-oxobutanoate: step 2/4.</text>
</comment>
<comment type="subunit">
    <text evidence="1">Heterodimer of LeuC and LeuD.</text>
</comment>
<comment type="similarity">
    <text evidence="1">Belongs to the aconitase/IPM isomerase family. LeuC type 1 subfamily.</text>
</comment>
<feature type="chain" id="PRO_1000149353" description="3-isopropylmalate dehydratase large subunit">
    <location>
        <begin position="1"/>
        <end position="464"/>
    </location>
</feature>
<feature type="binding site" evidence="1">
    <location>
        <position position="337"/>
    </location>
    <ligand>
        <name>[4Fe-4S] cluster</name>
        <dbReference type="ChEBI" id="CHEBI:49883"/>
    </ligand>
</feature>
<feature type="binding site" evidence="1">
    <location>
        <position position="397"/>
    </location>
    <ligand>
        <name>[4Fe-4S] cluster</name>
        <dbReference type="ChEBI" id="CHEBI:49883"/>
    </ligand>
</feature>
<feature type="binding site" evidence="1">
    <location>
        <position position="400"/>
    </location>
    <ligand>
        <name>[4Fe-4S] cluster</name>
        <dbReference type="ChEBI" id="CHEBI:49883"/>
    </ligand>
</feature>